<comment type="function">
    <text evidence="1">Converts 2C-methyl-D-erythritol 2,4-cyclodiphosphate (ME-2,4cPP) into 1-hydroxy-2-methyl-2-(E)-butenyl 4-diphosphate.</text>
</comment>
<comment type="catalytic activity">
    <reaction evidence="1">
        <text>(2E)-4-hydroxy-3-methylbut-2-enyl diphosphate + oxidized [flavodoxin] + H2O + 2 H(+) = 2-C-methyl-D-erythritol 2,4-cyclic diphosphate + reduced [flavodoxin]</text>
        <dbReference type="Rhea" id="RHEA:43604"/>
        <dbReference type="Rhea" id="RHEA-COMP:10622"/>
        <dbReference type="Rhea" id="RHEA-COMP:10623"/>
        <dbReference type="ChEBI" id="CHEBI:15377"/>
        <dbReference type="ChEBI" id="CHEBI:15378"/>
        <dbReference type="ChEBI" id="CHEBI:57618"/>
        <dbReference type="ChEBI" id="CHEBI:58210"/>
        <dbReference type="ChEBI" id="CHEBI:58483"/>
        <dbReference type="ChEBI" id="CHEBI:128753"/>
        <dbReference type="EC" id="1.17.7.3"/>
    </reaction>
</comment>
<comment type="cofactor">
    <cofactor evidence="1">
        <name>[4Fe-4S] cluster</name>
        <dbReference type="ChEBI" id="CHEBI:49883"/>
    </cofactor>
    <text evidence="1">Binds 1 [4Fe-4S] cluster.</text>
</comment>
<comment type="pathway">
    <text evidence="1">Isoprenoid biosynthesis; isopentenyl diphosphate biosynthesis via DXP pathway; isopentenyl diphosphate from 1-deoxy-D-xylulose 5-phosphate: step 5/6.</text>
</comment>
<comment type="similarity">
    <text evidence="1">Belongs to the IspG family.</text>
</comment>
<sequence length="417" mass="44705">MTGYFSFPFPRRTSVGVDVGGVAVGGGAPVVVQSMTNTDTADIDQTVAQVAALHRAGSEIVRITVDRDESAAAVPRIHERLQRLGINVPLVGDFHYIGHKLLADHPACAEALAKYRINPGNVGFKDKKDRQFTDIVEMAIKHDKPVRIGVNWGSLDQELLTRLMDDNQDKGFPLTAQEVTREAIVQSAILSAEMAEEIGLGRDKIILSAKVSGVQDLIAVYTELATRSDHALHLGLTEAGMGSKGIVASSAAMGILLQQGIGDTIRISLTPEPNGDRTREVQVAQELLQTMGFRQFVPIVAACPGCGRTTSTVFQELAQNIQADLRKNMPVWREKYPGVENLKVAVMGCIVNGPGESKHADIGISLPGTGETPTAPVFVDGKKAATLRGTSIAADFEKMVTDYIEQRFGRGGKAAAE</sequence>
<organism>
    <name type="scientific">Mesorhizobium japonicum (strain LMG 29417 / CECT 9101 / MAFF 303099)</name>
    <name type="common">Mesorhizobium loti (strain MAFF 303099)</name>
    <dbReference type="NCBI Taxonomy" id="266835"/>
    <lineage>
        <taxon>Bacteria</taxon>
        <taxon>Pseudomonadati</taxon>
        <taxon>Pseudomonadota</taxon>
        <taxon>Alphaproteobacteria</taxon>
        <taxon>Hyphomicrobiales</taxon>
        <taxon>Phyllobacteriaceae</taxon>
        <taxon>Mesorhizobium</taxon>
    </lineage>
</organism>
<dbReference type="EC" id="1.17.7.3" evidence="1"/>
<dbReference type="EMBL" id="BA000012">
    <property type="protein sequence ID" value="BAB50607.1"/>
    <property type="molecule type" value="Genomic_DNA"/>
</dbReference>
<dbReference type="RefSeq" id="WP_010911952.1">
    <property type="nucleotide sequence ID" value="NC_002678.2"/>
</dbReference>
<dbReference type="SMR" id="Q98FG0"/>
<dbReference type="KEGG" id="mlo:mll3792"/>
<dbReference type="PATRIC" id="fig|266835.9.peg.3020"/>
<dbReference type="eggNOG" id="COG0821">
    <property type="taxonomic scope" value="Bacteria"/>
</dbReference>
<dbReference type="HOGENOM" id="CLU_042258_1_0_5"/>
<dbReference type="UniPathway" id="UPA00056">
    <property type="reaction ID" value="UER00096"/>
</dbReference>
<dbReference type="Proteomes" id="UP000000552">
    <property type="component" value="Chromosome"/>
</dbReference>
<dbReference type="GO" id="GO:0051539">
    <property type="term" value="F:4 iron, 4 sulfur cluster binding"/>
    <property type="evidence" value="ECO:0007669"/>
    <property type="project" value="UniProtKB-UniRule"/>
</dbReference>
<dbReference type="GO" id="GO:0046429">
    <property type="term" value="F:4-hydroxy-3-methylbut-2-en-1-yl diphosphate synthase activity (ferredoxin)"/>
    <property type="evidence" value="ECO:0007669"/>
    <property type="project" value="UniProtKB-UniRule"/>
</dbReference>
<dbReference type="GO" id="GO:0141197">
    <property type="term" value="F:4-hydroxy-3-methylbut-2-enyl-diphosphate synthase activity (flavodoxin)"/>
    <property type="evidence" value="ECO:0007669"/>
    <property type="project" value="UniProtKB-EC"/>
</dbReference>
<dbReference type="GO" id="GO:0005506">
    <property type="term" value="F:iron ion binding"/>
    <property type="evidence" value="ECO:0007669"/>
    <property type="project" value="InterPro"/>
</dbReference>
<dbReference type="GO" id="GO:0019288">
    <property type="term" value="P:isopentenyl diphosphate biosynthetic process, methylerythritol 4-phosphate pathway"/>
    <property type="evidence" value="ECO:0007669"/>
    <property type="project" value="UniProtKB-UniRule"/>
</dbReference>
<dbReference type="GO" id="GO:0016114">
    <property type="term" value="P:terpenoid biosynthetic process"/>
    <property type="evidence" value="ECO:0007669"/>
    <property type="project" value="InterPro"/>
</dbReference>
<dbReference type="FunFam" id="3.30.413.10:FF:000012">
    <property type="entry name" value="4-hydroxy-3-methylbut-2-en-1-yl diphosphate synthase (flavodoxin)"/>
    <property type="match status" value="1"/>
</dbReference>
<dbReference type="Gene3D" id="3.20.20.20">
    <property type="entry name" value="Dihydropteroate synthase-like"/>
    <property type="match status" value="1"/>
</dbReference>
<dbReference type="Gene3D" id="3.30.413.10">
    <property type="entry name" value="Sulfite Reductase Hemoprotein, domain 1"/>
    <property type="match status" value="1"/>
</dbReference>
<dbReference type="HAMAP" id="MF_00159">
    <property type="entry name" value="IspG"/>
    <property type="match status" value="1"/>
</dbReference>
<dbReference type="InterPro" id="IPR011005">
    <property type="entry name" value="Dihydropteroate_synth-like_sf"/>
</dbReference>
<dbReference type="InterPro" id="IPR016425">
    <property type="entry name" value="IspG_bac"/>
</dbReference>
<dbReference type="InterPro" id="IPR004588">
    <property type="entry name" value="IspG_bac-typ"/>
</dbReference>
<dbReference type="InterPro" id="IPR045854">
    <property type="entry name" value="NO2/SO3_Rdtase_4Fe4S_sf"/>
</dbReference>
<dbReference type="NCBIfam" id="TIGR00612">
    <property type="entry name" value="ispG_gcpE"/>
    <property type="match status" value="1"/>
</dbReference>
<dbReference type="NCBIfam" id="NF001540">
    <property type="entry name" value="PRK00366.1"/>
    <property type="match status" value="1"/>
</dbReference>
<dbReference type="PANTHER" id="PTHR30454">
    <property type="entry name" value="4-HYDROXY-3-METHYLBUT-2-EN-1-YL DIPHOSPHATE SYNTHASE"/>
    <property type="match status" value="1"/>
</dbReference>
<dbReference type="PANTHER" id="PTHR30454:SF0">
    <property type="entry name" value="4-HYDROXY-3-METHYLBUT-2-EN-1-YL DIPHOSPHATE SYNTHASE (FERREDOXIN), CHLOROPLASTIC"/>
    <property type="match status" value="1"/>
</dbReference>
<dbReference type="Pfam" id="PF04551">
    <property type="entry name" value="GcpE"/>
    <property type="match status" value="1"/>
</dbReference>
<dbReference type="PIRSF" id="PIRSF004640">
    <property type="entry name" value="IspG"/>
    <property type="match status" value="1"/>
</dbReference>
<dbReference type="SUPFAM" id="SSF56014">
    <property type="entry name" value="Nitrite and sulphite reductase 4Fe-4S domain-like"/>
    <property type="match status" value="1"/>
</dbReference>
<feature type="chain" id="PRO_0000190622" description="4-hydroxy-3-methylbut-2-en-1-yl diphosphate synthase (flavodoxin)">
    <location>
        <begin position="1"/>
        <end position="417"/>
    </location>
</feature>
<feature type="binding site" evidence="1">
    <location>
        <position position="303"/>
    </location>
    <ligand>
        <name>[4Fe-4S] cluster</name>
        <dbReference type="ChEBI" id="CHEBI:49883"/>
    </ligand>
</feature>
<feature type="binding site" evidence="1">
    <location>
        <position position="306"/>
    </location>
    <ligand>
        <name>[4Fe-4S] cluster</name>
        <dbReference type="ChEBI" id="CHEBI:49883"/>
    </ligand>
</feature>
<feature type="binding site" evidence="1">
    <location>
        <position position="349"/>
    </location>
    <ligand>
        <name>[4Fe-4S] cluster</name>
        <dbReference type="ChEBI" id="CHEBI:49883"/>
    </ligand>
</feature>
<feature type="binding site" evidence="1">
    <location>
        <position position="356"/>
    </location>
    <ligand>
        <name>[4Fe-4S] cluster</name>
        <dbReference type="ChEBI" id="CHEBI:49883"/>
    </ligand>
</feature>
<reference key="1">
    <citation type="journal article" date="2000" name="DNA Res.">
        <title>Complete genome structure of the nitrogen-fixing symbiotic bacterium Mesorhizobium loti.</title>
        <authorList>
            <person name="Kaneko T."/>
            <person name="Nakamura Y."/>
            <person name="Sato S."/>
            <person name="Asamizu E."/>
            <person name="Kato T."/>
            <person name="Sasamoto S."/>
            <person name="Watanabe A."/>
            <person name="Idesawa K."/>
            <person name="Ishikawa A."/>
            <person name="Kawashima K."/>
            <person name="Kimura T."/>
            <person name="Kishida Y."/>
            <person name="Kiyokawa C."/>
            <person name="Kohara M."/>
            <person name="Matsumoto M."/>
            <person name="Matsuno A."/>
            <person name="Mochizuki Y."/>
            <person name="Nakayama S."/>
            <person name="Nakazaki N."/>
            <person name="Shimpo S."/>
            <person name="Sugimoto M."/>
            <person name="Takeuchi C."/>
            <person name="Yamada M."/>
            <person name="Tabata S."/>
        </authorList>
    </citation>
    <scope>NUCLEOTIDE SEQUENCE [LARGE SCALE GENOMIC DNA]</scope>
    <source>
        <strain>LMG 29417 / CECT 9101 / MAFF 303099</strain>
    </source>
</reference>
<proteinExistence type="inferred from homology"/>
<gene>
    <name evidence="1" type="primary">ispG</name>
    <name type="ordered locus">mll3792</name>
</gene>
<name>ISPG_RHILO</name>
<accession>Q98FG0</accession>
<keyword id="KW-0004">4Fe-4S</keyword>
<keyword id="KW-0408">Iron</keyword>
<keyword id="KW-0411">Iron-sulfur</keyword>
<keyword id="KW-0414">Isoprene biosynthesis</keyword>
<keyword id="KW-0479">Metal-binding</keyword>
<keyword id="KW-0560">Oxidoreductase</keyword>
<protein>
    <recommendedName>
        <fullName evidence="1">4-hydroxy-3-methylbut-2-en-1-yl diphosphate synthase (flavodoxin)</fullName>
        <ecNumber evidence="1">1.17.7.3</ecNumber>
    </recommendedName>
    <alternativeName>
        <fullName evidence="1">1-hydroxy-2-methyl-2-(E)-butenyl 4-diphosphate synthase</fullName>
    </alternativeName>
</protein>
<evidence type="ECO:0000255" key="1">
    <source>
        <dbReference type="HAMAP-Rule" id="MF_00159"/>
    </source>
</evidence>